<gene>
    <name type="primary">AIF</name>
    <name type="ORF">CG7263</name>
</gene>
<dbReference type="EC" id="1.6.99.-" evidence="2"/>
<dbReference type="EMBL" id="AE014134">
    <property type="protein sequence ID" value="AAF51299.2"/>
    <property type="molecule type" value="Genomic_DNA"/>
</dbReference>
<dbReference type="EMBL" id="AE014134">
    <property type="protein sequence ID" value="AAN10444.2"/>
    <property type="molecule type" value="Genomic_DNA"/>
</dbReference>
<dbReference type="EMBL" id="AY052083">
    <property type="protein sequence ID" value="AAK93507.1"/>
    <property type="molecule type" value="mRNA"/>
</dbReference>
<dbReference type="EMBL" id="AY058696">
    <property type="protein sequence ID" value="AAL13925.1"/>
    <property type="status" value="ALT_INIT"/>
    <property type="molecule type" value="mRNA"/>
</dbReference>
<dbReference type="EMBL" id="BT044192">
    <property type="protein sequence ID" value="ACH92257.1"/>
    <property type="molecule type" value="mRNA"/>
</dbReference>
<dbReference type="RefSeq" id="NP_608649.2">
    <molecule id="Q9VQ79-1"/>
    <property type="nucleotide sequence ID" value="NM_134805.4"/>
</dbReference>
<dbReference type="RefSeq" id="NP_722765.2">
    <molecule id="Q9VQ79-2"/>
    <property type="nucleotide sequence ID" value="NM_164456.3"/>
</dbReference>
<dbReference type="SMR" id="Q9VQ79"/>
<dbReference type="BioGRID" id="59619">
    <property type="interactions" value="20"/>
</dbReference>
<dbReference type="FunCoup" id="Q9VQ79">
    <property type="interactions" value="1331"/>
</dbReference>
<dbReference type="IntAct" id="Q9VQ79">
    <property type="interactions" value="4"/>
</dbReference>
<dbReference type="STRING" id="7227.FBpp0077504"/>
<dbReference type="PaxDb" id="7227-FBpp0077504"/>
<dbReference type="DNASU" id="33390"/>
<dbReference type="EnsemblMetazoa" id="FBtr0077830">
    <molecule id="Q9VQ79-1"/>
    <property type="protein sequence ID" value="FBpp0077503"/>
    <property type="gene ID" value="FBgn0031392"/>
</dbReference>
<dbReference type="EnsemblMetazoa" id="FBtr0077831">
    <molecule id="Q9VQ79-2"/>
    <property type="protein sequence ID" value="FBpp0077504"/>
    <property type="gene ID" value="FBgn0031392"/>
</dbReference>
<dbReference type="GeneID" id="33390"/>
<dbReference type="KEGG" id="dme:Dmel_CG7263"/>
<dbReference type="AGR" id="FB:FBgn0031392"/>
<dbReference type="CTD" id="33390"/>
<dbReference type="FlyBase" id="FBgn0031392">
    <property type="gene designation" value="AIF"/>
</dbReference>
<dbReference type="VEuPathDB" id="VectorBase:FBgn0031392"/>
<dbReference type="eggNOG" id="KOG1346">
    <property type="taxonomic scope" value="Eukaryota"/>
</dbReference>
<dbReference type="GeneTree" id="ENSGT00940000156455"/>
<dbReference type="InParanoid" id="Q9VQ79"/>
<dbReference type="OMA" id="RSIFFEH"/>
<dbReference type="OrthoDB" id="6029at2759"/>
<dbReference type="PhylomeDB" id="Q9VQ79"/>
<dbReference type="BioGRID-ORCS" id="33390">
    <property type="hits" value="1 hit in 3 CRISPR screens"/>
</dbReference>
<dbReference type="GenomeRNAi" id="33390"/>
<dbReference type="PRO" id="PR:Q9VQ79"/>
<dbReference type="Proteomes" id="UP000000803">
    <property type="component" value="Chromosome 2L"/>
</dbReference>
<dbReference type="Bgee" id="FBgn0031392">
    <property type="expression patterns" value="Expressed in egg chamber and 99 other cell types or tissues"/>
</dbReference>
<dbReference type="ExpressionAtlas" id="Q9VQ79">
    <property type="expression patterns" value="baseline and differential"/>
</dbReference>
<dbReference type="GO" id="GO:0005737">
    <property type="term" value="C:cytoplasm"/>
    <property type="evidence" value="ECO:0000318"/>
    <property type="project" value="GO_Central"/>
</dbReference>
<dbReference type="GO" id="GO:0005758">
    <property type="term" value="C:mitochondrial intermembrane space"/>
    <property type="evidence" value="ECO:0000314"/>
    <property type="project" value="UniProtKB"/>
</dbReference>
<dbReference type="GO" id="GO:0005739">
    <property type="term" value="C:mitochondrion"/>
    <property type="evidence" value="ECO:0000318"/>
    <property type="project" value="GO_Central"/>
</dbReference>
<dbReference type="GO" id="GO:0003677">
    <property type="term" value="F:DNA binding"/>
    <property type="evidence" value="ECO:0000250"/>
    <property type="project" value="UniProtKB"/>
</dbReference>
<dbReference type="GO" id="GO:0071949">
    <property type="term" value="F:FAD binding"/>
    <property type="evidence" value="ECO:0000250"/>
    <property type="project" value="UniProtKB"/>
</dbReference>
<dbReference type="GO" id="GO:0016174">
    <property type="term" value="F:NAD(P)H oxidase H2O2-forming activity"/>
    <property type="evidence" value="ECO:0000250"/>
    <property type="project" value="UniProtKB"/>
</dbReference>
<dbReference type="GO" id="GO:0003954">
    <property type="term" value="F:NADH dehydrogenase activity"/>
    <property type="evidence" value="ECO:0007669"/>
    <property type="project" value="RHEA"/>
</dbReference>
<dbReference type="GO" id="GO:0046983">
    <property type="term" value="F:protein dimerization activity"/>
    <property type="evidence" value="ECO:0007669"/>
    <property type="project" value="InterPro"/>
</dbReference>
<dbReference type="GO" id="GO:0006915">
    <property type="term" value="P:apoptotic process"/>
    <property type="evidence" value="ECO:0000318"/>
    <property type="project" value="GO_Central"/>
</dbReference>
<dbReference type="GO" id="GO:0160203">
    <property type="term" value="P:mitochondrial disulfide relay system"/>
    <property type="evidence" value="ECO:0000315"/>
    <property type="project" value="FlyBase"/>
</dbReference>
<dbReference type="GO" id="GO:0033108">
    <property type="term" value="P:mitochondrial respiratory chain complex assembly"/>
    <property type="evidence" value="ECO:0000318"/>
    <property type="project" value="GO_Central"/>
</dbReference>
<dbReference type="GO" id="GO:0010623">
    <property type="term" value="P:programmed cell death involved in cell development"/>
    <property type="evidence" value="ECO:0000315"/>
    <property type="project" value="FlyBase"/>
</dbReference>
<dbReference type="GO" id="GO:0045041">
    <property type="term" value="P:protein import into mitochondrial intermembrane space"/>
    <property type="evidence" value="ECO:0000250"/>
    <property type="project" value="UniProtKB"/>
</dbReference>
<dbReference type="Gene3D" id="3.30.390.30">
    <property type="match status" value="1"/>
</dbReference>
<dbReference type="Gene3D" id="3.50.50.60">
    <property type="entry name" value="FAD/NAD(P)-binding domain"/>
    <property type="match status" value="2"/>
</dbReference>
<dbReference type="InterPro" id="IPR029324">
    <property type="entry name" value="AIF_C"/>
</dbReference>
<dbReference type="InterPro" id="IPR050446">
    <property type="entry name" value="FAD-oxidoreductase/Apoptosis"/>
</dbReference>
<dbReference type="InterPro" id="IPR036188">
    <property type="entry name" value="FAD/NAD-bd_sf"/>
</dbReference>
<dbReference type="InterPro" id="IPR023753">
    <property type="entry name" value="FAD/NAD-binding_dom"/>
</dbReference>
<dbReference type="InterPro" id="IPR016156">
    <property type="entry name" value="FAD/NAD-linked_Rdtase_dimer_sf"/>
</dbReference>
<dbReference type="PANTHER" id="PTHR43557">
    <property type="entry name" value="APOPTOSIS-INDUCING FACTOR 1"/>
    <property type="match status" value="1"/>
</dbReference>
<dbReference type="PANTHER" id="PTHR43557:SF4">
    <property type="entry name" value="APOPTOSIS-INDUCING FACTOR 1, MITOCHONDRIAL"/>
    <property type="match status" value="1"/>
</dbReference>
<dbReference type="Pfam" id="PF14721">
    <property type="entry name" value="AIF_C"/>
    <property type="match status" value="1"/>
</dbReference>
<dbReference type="Pfam" id="PF07992">
    <property type="entry name" value="Pyr_redox_2"/>
    <property type="match status" value="1"/>
</dbReference>
<dbReference type="PRINTS" id="PR00368">
    <property type="entry name" value="FADPNR"/>
</dbReference>
<dbReference type="PRINTS" id="PR00411">
    <property type="entry name" value="PNDRDTASEI"/>
</dbReference>
<dbReference type="SMART" id="SM01353">
    <property type="entry name" value="AIF_C"/>
    <property type="match status" value="1"/>
</dbReference>
<dbReference type="SUPFAM" id="SSF51905">
    <property type="entry name" value="FAD/NAD(P)-binding domain"/>
    <property type="match status" value="2"/>
</dbReference>
<dbReference type="SUPFAM" id="SSF55424">
    <property type="entry name" value="FAD/NAD-linked reductases, dimerisation (C-terminal) domain"/>
    <property type="match status" value="1"/>
</dbReference>
<reference key="1">
    <citation type="journal article" date="2008" name="Cell Death Differ.">
        <title>The molecular archaeology of a mitochondrial death effector: AIF in Drosophila.</title>
        <authorList>
            <person name="Joza N."/>
            <person name="Galindo K."/>
            <person name="Pospisilik J.A."/>
            <person name="Benit P."/>
            <person name="Rangachari M."/>
            <person name="Kanitz E.E."/>
            <person name="Nakashima Y."/>
            <person name="Neely G.G."/>
            <person name="Rustin P."/>
            <person name="Abrams J.M."/>
            <person name="Kroemer G."/>
            <person name="Penninger J.M."/>
        </authorList>
    </citation>
    <scope>NUCLEOTIDE SEQUENCE [MRNA] (ISOFORM A)</scope>
    <scope>FUNCTION</scope>
    <scope>SUBCELLULAR LOCATION</scope>
    <scope>DEVELOPMENTAL STAGE</scope>
    <scope>DISRUPTION PHENOTYPE</scope>
    <source>
        <strain>Berkeley</strain>
        <tissue>Embryo</tissue>
    </source>
</reference>
<reference key="2">
    <citation type="journal article" date="2000" name="Science">
        <title>The genome sequence of Drosophila melanogaster.</title>
        <authorList>
            <person name="Adams M.D."/>
            <person name="Celniker S.E."/>
            <person name="Holt R.A."/>
            <person name="Evans C.A."/>
            <person name="Gocayne J.D."/>
            <person name="Amanatides P.G."/>
            <person name="Scherer S.E."/>
            <person name="Li P.W."/>
            <person name="Hoskins R.A."/>
            <person name="Galle R.F."/>
            <person name="George R.A."/>
            <person name="Lewis S.E."/>
            <person name="Richards S."/>
            <person name="Ashburner M."/>
            <person name="Henderson S.N."/>
            <person name="Sutton G.G."/>
            <person name="Wortman J.R."/>
            <person name="Yandell M.D."/>
            <person name="Zhang Q."/>
            <person name="Chen L.X."/>
            <person name="Brandon R.C."/>
            <person name="Rogers Y.-H.C."/>
            <person name="Blazej R.G."/>
            <person name="Champe M."/>
            <person name="Pfeiffer B.D."/>
            <person name="Wan K.H."/>
            <person name="Doyle C."/>
            <person name="Baxter E.G."/>
            <person name="Helt G."/>
            <person name="Nelson C.R."/>
            <person name="Miklos G.L.G."/>
            <person name="Abril J.F."/>
            <person name="Agbayani A."/>
            <person name="An H.-J."/>
            <person name="Andrews-Pfannkoch C."/>
            <person name="Baldwin D."/>
            <person name="Ballew R.M."/>
            <person name="Basu A."/>
            <person name="Baxendale J."/>
            <person name="Bayraktaroglu L."/>
            <person name="Beasley E.M."/>
            <person name="Beeson K.Y."/>
            <person name="Benos P.V."/>
            <person name="Berman B.P."/>
            <person name="Bhandari D."/>
            <person name="Bolshakov S."/>
            <person name="Borkova D."/>
            <person name="Botchan M.R."/>
            <person name="Bouck J."/>
            <person name="Brokstein P."/>
            <person name="Brottier P."/>
            <person name="Burtis K.C."/>
            <person name="Busam D.A."/>
            <person name="Butler H."/>
            <person name="Cadieu E."/>
            <person name="Center A."/>
            <person name="Chandra I."/>
            <person name="Cherry J.M."/>
            <person name="Cawley S."/>
            <person name="Dahlke C."/>
            <person name="Davenport L.B."/>
            <person name="Davies P."/>
            <person name="de Pablos B."/>
            <person name="Delcher A."/>
            <person name="Deng Z."/>
            <person name="Mays A.D."/>
            <person name="Dew I."/>
            <person name="Dietz S.M."/>
            <person name="Dodson K."/>
            <person name="Doup L.E."/>
            <person name="Downes M."/>
            <person name="Dugan-Rocha S."/>
            <person name="Dunkov B.C."/>
            <person name="Dunn P."/>
            <person name="Durbin K.J."/>
            <person name="Evangelista C.C."/>
            <person name="Ferraz C."/>
            <person name="Ferriera S."/>
            <person name="Fleischmann W."/>
            <person name="Fosler C."/>
            <person name="Gabrielian A.E."/>
            <person name="Garg N.S."/>
            <person name="Gelbart W.M."/>
            <person name="Glasser K."/>
            <person name="Glodek A."/>
            <person name="Gong F."/>
            <person name="Gorrell J.H."/>
            <person name="Gu Z."/>
            <person name="Guan P."/>
            <person name="Harris M."/>
            <person name="Harris N.L."/>
            <person name="Harvey D.A."/>
            <person name="Heiman T.J."/>
            <person name="Hernandez J.R."/>
            <person name="Houck J."/>
            <person name="Hostin D."/>
            <person name="Houston K.A."/>
            <person name="Howland T.J."/>
            <person name="Wei M.-H."/>
            <person name="Ibegwam C."/>
            <person name="Jalali M."/>
            <person name="Kalush F."/>
            <person name="Karpen G.H."/>
            <person name="Ke Z."/>
            <person name="Kennison J.A."/>
            <person name="Ketchum K.A."/>
            <person name="Kimmel B.E."/>
            <person name="Kodira C.D."/>
            <person name="Kraft C.L."/>
            <person name="Kravitz S."/>
            <person name="Kulp D."/>
            <person name="Lai Z."/>
            <person name="Lasko P."/>
            <person name="Lei Y."/>
            <person name="Levitsky A.A."/>
            <person name="Li J.H."/>
            <person name="Li Z."/>
            <person name="Liang Y."/>
            <person name="Lin X."/>
            <person name="Liu X."/>
            <person name="Mattei B."/>
            <person name="McIntosh T.C."/>
            <person name="McLeod M.P."/>
            <person name="McPherson D."/>
            <person name="Merkulov G."/>
            <person name="Milshina N.V."/>
            <person name="Mobarry C."/>
            <person name="Morris J."/>
            <person name="Moshrefi A."/>
            <person name="Mount S.M."/>
            <person name="Moy M."/>
            <person name="Murphy B."/>
            <person name="Murphy L."/>
            <person name="Muzny D.M."/>
            <person name="Nelson D.L."/>
            <person name="Nelson D.R."/>
            <person name="Nelson K.A."/>
            <person name="Nixon K."/>
            <person name="Nusskern D.R."/>
            <person name="Pacleb J.M."/>
            <person name="Palazzolo M."/>
            <person name="Pittman G.S."/>
            <person name="Pan S."/>
            <person name="Pollard J."/>
            <person name="Puri V."/>
            <person name="Reese M.G."/>
            <person name="Reinert K."/>
            <person name="Remington K."/>
            <person name="Saunders R.D.C."/>
            <person name="Scheeler F."/>
            <person name="Shen H."/>
            <person name="Shue B.C."/>
            <person name="Siden-Kiamos I."/>
            <person name="Simpson M."/>
            <person name="Skupski M.P."/>
            <person name="Smith T.J."/>
            <person name="Spier E."/>
            <person name="Spradling A.C."/>
            <person name="Stapleton M."/>
            <person name="Strong R."/>
            <person name="Sun E."/>
            <person name="Svirskas R."/>
            <person name="Tector C."/>
            <person name="Turner R."/>
            <person name="Venter E."/>
            <person name="Wang A.H."/>
            <person name="Wang X."/>
            <person name="Wang Z.-Y."/>
            <person name="Wassarman D.A."/>
            <person name="Weinstock G.M."/>
            <person name="Weissenbach J."/>
            <person name="Williams S.M."/>
            <person name="Woodage T."/>
            <person name="Worley K.C."/>
            <person name="Wu D."/>
            <person name="Yang S."/>
            <person name="Yao Q.A."/>
            <person name="Ye J."/>
            <person name="Yeh R.-F."/>
            <person name="Zaveri J.S."/>
            <person name="Zhan M."/>
            <person name="Zhang G."/>
            <person name="Zhao Q."/>
            <person name="Zheng L."/>
            <person name="Zheng X.H."/>
            <person name="Zhong F.N."/>
            <person name="Zhong W."/>
            <person name="Zhou X."/>
            <person name="Zhu S.C."/>
            <person name="Zhu X."/>
            <person name="Smith H.O."/>
            <person name="Gibbs R.A."/>
            <person name="Myers E.W."/>
            <person name="Rubin G.M."/>
            <person name="Venter J.C."/>
        </authorList>
    </citation>
    <scope>NUCLEOTIDE SEQUENCE [LARGE SCALE GENOMIC DNA]</scope>
    <source>
        <strain>Berkeley</strain>
    </source>
</reference>
<reference key="3">
    <citation type="journal article" date="2002" name="Genome Biol.">
        <title>Annotation of the Drosophila melanogaster euchromatic genome: a systematic review.</title>
        <authorList>
            <person name="Misra S."/>
            <person name="Crosby M.A."/>
            <person name="Mungall C.J."/>
            <person name="Matthews B.B."/>
            <person name="Campbell K.S."/>
            <person name="Hradecky P."/>
            <person name="Huang Y."/>
            <person name="Kaminker J.S."/>
            <person name="Millburn G.H."/>
            <person name="Prochnik S.E."/>
            <person name="Smith C.D."/>
            <person name="Tupy J.L."/>
            <person name="Whitfield E.J."/>
            <person name="Bayraktaroglu L."/>
            <person name="Berman B.P."/>
            <person name="Bettencourt B.R."/>
            <person name="Celniker S.E."/>
            <person name="de Grey A.D.N.J."/>
            <person name="Drysdale R.A."/>
            <person name="Harris N.L."/>
            <person name="Richter J."/>
            <person name="Russo S."/>
            <person name="Schroeder A.J."/>
            <person name="Shu S.Q."/>
            <person name="Stapleton M."/>
            <person name="Yamada C."/>
            <person name="Ashburner M."/>
            <person name="Gelbart W.M."/>
            <person name="Rubin G.M."/>
            <person name="Lewis S.E."/>
        </authorList>
    </citation>
    <scope>GENOME REANNOTATION</scope>
    <scope>ALTERNATIVE SPLICING</scope>
    <source>
        <strain>Berkeley</strain>
    </source>
</reference>
<reference key="4">
    <citation type="journal article" date="2002" name="Genome Biol.">
        <title>A Drosophila full-length cDNA resource.</title>
        <authorList>
            <person name="Stapleton M."/>
            <person name="Carlson J.W."/>
            <person name="Brokstein P."/>
            <person name="Yu C."/>
            <person name="Champe M."/>
            <person name="George R.A."/>
            <person name="Guarin H."/>
            <person name="Kronmiller B."/>
            <person name="Pacleb J.M."/>
            <person name="Park S."/>
            <person name="Wan K.H."/>
            <person name="Rubin G.M."/>
            <person name="Celniker S.E."/>
        </authorList>
    </citation>
    <scope>NUCLEOTIDE SEQUENCE [LARGE SCALE MRNA] (ISOFORM A)</scope>
    <source>
        <strain>Berkeley</strain>
        <tissue>Embryo</tissue>
    </source>
</reference>
<reference key="5">
    <citation type="submission" date="2008-09" db="EMBL/GenBank/DDBJ databases">
        <authorList>
            <person name="Carlson J.W."/>
            <person name="Booth B."/>
            <person name="Frise E."/>
            <person name="Park S."/>
            <person name="Wan K.H."/>
            <person name="Yu C."/>
            <person name="Celniker S.E."/>
        </authorList>
    </citation>
    <scope>NUCLEOTIDE SEQUENCE [LARGE SCALE MRNA] (ISOFORM A)</scope>
    <source>
        <strain>Berkeley</strain>
    </source>
</reference>
<name>AIFM1_DROME</name>
<feature type="transit peptide" description="Mitochondrion" evidence="3">
    <location>
        <begin position="1"/>
        <end position="42"/>
    </location>
</feature>
<feature type="chain" id="PRO_0000022029" description="Putative apoptosis-inducing factor 1, mitochondrial">
    <location>
        <begin position="43"/>
        <end position="739"/>
    </location>
</feature>
<feature type="region of interest" description="FAD-dependent oxidoreductase">
    <location>
        <begin position="257"/>
        <end position="564"/>
    </location>
</feature>
<feature type="region of interest" description="Disordered" evidence="4">
    <location>
        <begin position="644"/>
        <end position="681"/>
    </location>
</feature>
<feature type="compositionally biased region" description="Low complexity" evidence="4">
    <location>
        <begin position="656"/>
        <end position="676"/>
    </location>
</feature>
<feature type="binding site" evidence="1">
    <location>
        <begin position="261"/>
        <end position="265"/>
    </location>
    <ligand>
        <name>FAD</name>
        <dbReference type="ChEBI" id="CHEBI:57692"/>
    </ligand>
</feature>
<feature type="binding site" evidence="1">
    <location>
        <position position="295"/>
    </location>
    <ligand>
        <name>FAD</name>
        <dbReference type="ChEBI" id="CHEBI:57692"/>
    </ligand>
</feature>
<feature type="binding site" evidence="1">
    <location>
        <position position="300"/>
    </location>
    <ligand>
        <name>FAD</name>
        <dbReference type="ChEBI" id="CHEBI:57692"/>
    </ligand>
</feature>
<feature type="binding site" evidence="1">
    <location>
        <position position="358"/>
    </location>
    <ligand>
        <name>FAD</name>
        <dbReference type="ChEBI" id="CHEBI:57692"/>
    </ligand>
</feature>
<feature type="binding site" evidence="1">
    <location>
        <position position="410"/>
    </location>
    <ligand>
        <name>FAD</name>
        <dbReference type="ChEBI" id="CHEBI:57692"/>
    </ligand>
</feature>
<feature type="binding site" evidence="1">
    <location>
        <position position="564"/>
    </location>
    <ligand>
        <name>FAD</name>
        <dbReference type="ChEBI" id="CHEBI:57692"/>
    </ligand>
</feature>
<feature type="binding site" evidence="1">
    <location>
        <begin position="580"/>
        <end position="581"/>
    </location>
    <ligand>
        <name>FAD</name>
        <dbReference type="ChEBI" id="CHEBI:57692"/>
    </ligand>
</feature>
<feature type="splice variant" id="VSP_007951" description="In isoform A." evidence="6 7 8">
    <location>
        <begin position="51"/>
        <end position="115"/>
    </location>
</feature>
<feature type="sequence conflict" description="In Ref. 4; AAK93507." evidence="9" ref="4">
    <original>E</original>
    <variation>D</variation>
    <location>
        <position position="639"/>
    </location>
</feature>
<proteinExistence type="evidence at transcript level"/>
<protein>
    <recommendedName>
        <fullName>Putative apoptosis-inducing factor 1, mitochondrial</fullName>
        <shortName>DmAIF</shortName>
        <ecNumber evidence="2">1.6.99.-</ecNumber>
    </recommendedName>
</protein>
<comment type="function">
    <text evidence="1 5">Probable NADH oxidoreductase (By similarity). Mitochondrial effector of cell death that plays roles in developmentally regulated cell death and normal mitochondrial function.</text>
</comment>
<comment type="catalytic activity">
    <reaction evidence="2">
        <text>A + NADH + H(+) = AH2 + NAD(+)</text>
        <dbReference type="Rhea" id="RHEA:11356"/>
        <dbReference type="ChEBI" id="CHEBI:13193"/>
        <dbReference type="ChEBI" id="CHEBI:15378"/>
        <dbReference type="ChEBI" id="CHEBI:17499"/>
        <dbReference type="ChEBI" id="CHEBI:57540"/>
        <dbReference type="ChEBI" id="CHEBI:57945"/>
    </reaction>
</comment>
<comment type="cofactor">
    <cofactor evidence="1">
        <name>FAD</name>
        <dbReference type="ChEBI" id="CHEBI:57692"/>
    </cofactor>
</comment>
<comment type="subcellular location">
    <subcellularLocation>
        <location evidence="5">Mitochondrion intermembrane space</location>
    </subcellularLocation>
</comment>
<comment type="alternative products">
    <event type="alternative splicing"/>
    <isoform>
        <id>Q9VQ79-2</id>
        <name>B</name>
        <sequence type="displayed"/>
    </isoform>
    <isoform>
        <id>Q9VQ79-1</id>
        <name>A</name>
        <sequence type="described" ref="VSP_007951"/>
    </isoform>
</comment>
<comment type="developmental stage">
    <text evidence="5">Expressed both maternally and zygotically throughout development with slightly lower levels during pupation.</text>
</comment>
<comment type="disruption phenotype">
    <text evidence="5">Loss of zygotic expression results in decreased embryonic cell death and the persistence of differentiated neuronal cells along the ventral nerve cord at late embryonic stages. Embryos that do hatch undergo growth arrest at early larval stages, accompanied by mitochondrial respiratory dysfunction.</text>
</comment>
<comment type="similarity">
    <text evidence="9">Belongs to the FAD-dependent oxidoreductase family.</text>
</comment>
<comment type="sequence caution" evidence="9">
    <conflict type="erroneous initiation">
        <sequence resource="EMBL-CDS" id="AAL13925"/>
    </conflict>
    <text>Truncated N-terminus.</text>
</comment>
<evidence type="ECO:0000250" key="1"/>
<evidence type="ECO:0000250" key="2">
    <source>
        <dbReference type="UniProtKB" id="O95831"/>
    </source>
</evidence>
<evidence type="ECO:0000255" key="3"/>
<evidence type="ECO:0000256" key="4">
    <source>
        <dbReference type="SAM" id="MobiDB-lite"/>
    </source>
</evidence>
<evidence type="ECO:0000269" key="5">
    <source>
    </source>
</evidence>
<evidence type="ECO:0000303" key="6">
    <source>
    </source>
</evidence>
<evidence type="ECO:0000303" key="7">
    <source>
    </source>
</evidence>
<evidence type="ECO:0000303" key="8">
    <source ref="5"/>
</evidence>
<evidence type="ECO:0000305" key="9"/>
<accession>Q9VQ79</accession>
<accession>B5RIR8</accession>
<accession>Q95TL9</accession>
<accession>Q960F8</accession>
<sequence>MSIWGVRCLTQRFIRQAYILANRRLLGPVPQRSPPAYAPLRPAHSSLYQMVKKRTLEARTKLQANKYPNHQVCVTKPSTTPPVEEYETAVEGAGVPAYANAQFQAHSQSEPLFKVGFADVKSVCSAKDVLKSDSAKLSTSQPVLDSCKATSPCEEFKRKRKETTCQPCDEDGTAPGGGDGGDEECECRMKDLRLKCLLGALAALLAGGFLAWFMTRDTDDSEAKKAEAEEEERKRRLVAGLATSPPSSEDLPKHVPYLIIGGGTAAFSAFRAIKSNDATAKVLMISNEFRKPYMRPPLSKELWYTPNPNEDPIKDYRFKQWTGSERSLFFEPDEFFIDPEDLDDNANGGIAVAQGFSVKKVDAQKRIVTLNDGYEISYDECLIATGCAPKNLPMLRDAPPSVLEKVMVYRTPDDFDRLRKLAAEKRSITIVGNGFIGSELACSLAHYSRENNGGKVYQVFQENANMSKVLPNYLSRWTTAKMEAQGVCVIPNASIRSAVRDETNLKLELNNGMTLMSDVVVVCVGCTPNTDLAGPSRLEVDRSLGGFVVNAELEARRNLYVAGDASCFFDPLLGRRRVEHHDHSVVSGRLAGENMTGAKKPYQHQSMFWSDLGPEIGYEGIGLVDSSLPTVGVFALPSESATRVDQLSESSDSDVPETSTSSSQSSKSDAGASQDGVTCDPDEAGNYGKGVIFYLKNDKIVGILLWNLFNRIGLARTIINQNKKYDDLNEVAKLFEIHA</sequence>
<keyword id="KW-0025">Alternative splicing</keyword>
<keyword id="KW-0053">Apoptosis</keyword>
<keyword id="KW-0274">FAD</keyword>
<keyword id="KW-0285">Flavoprotein</keyword>
<keyword id="KW-0496">Mitochondrion</keyword>
<keyword id="KW-0520">NAD</keyword>
<keyword id="KW-0560">Oxidoreductase</keyword>
<keyword id="KW-1185">Reference proteome</keyword>
<keyword id="KW-0809">Transit peptide</keyword>
<organism>
    <name type="scientific">Drosophila melanogaster</name>
    <name type="common">Fruit fly</name>
    <dbReference type="NCBI Taxonomy" id="7227"/>
    <lineage>
        <taxon>Eukaryota</taxon>
        <taxon>Metazoa</taxon>
        <taxon>Ecdysozoa</taxon>
        <taxon>Arthropoda</taxon>
        <taxon>Hexapoda</taxon>
        <taxon>Insecta</taxon>
        <taxon>Pterygota</taxon>
        <taxon>Neoptera</taxon>
        <taxon>Endopterygota</taxon>
        <taxon>Diptera</taxon>
        <taxon>Brachycera</taxon>
        <taxon>Muscomorpha</taxon>
        <taxon>Ephydroidea</taxon>
        <taxon>Drosophilidae</taxon>
        <taxon>Drosophila</taxon>
        <taxon>Sophophora</taxon>
    </lineage>
</organism>